<name>LIPA_CALS4</name>
<feature type="chain" id="PRO_0000102373" description="Lipoyl synthase">
    <location>
        <begin position="1"/>
        <end position="284"/>
    </location>
</feature>
<feature type="domain" description="Radical SAM core" evidence="2">
    <location>
        <begin position="46"/>
        <end position="261"/>
    </location>
</feature>
<feature type="binding site" evidence="1">
    <location>
        <position position="34"/>
    </location>
    <ligand>
        <name>[4Fe-4S] cluster</name>
        <dbReference type="ChEBI" id="CHEBI:49883"/>
        <label>1</label>
    </ligand>
</feature>
<feature type="binding site" evidence="1">
    <location>
        <position position="39"/>
    </location>
    <ligand>
        <name>[4Fe-4S] cluster</name>
        <dbReference type="ChEBI" id="CHEBI:49883"/>
        <label>1</label>
    </ligand>
</feature>
<feature type="binding site" evidence="1">
    <location>
        <position position="45"/>
    </location>
    <ligand>
        <name>[4Fe-4S] cluster</name>
        <dbReference type="ChEBI" id="CHEBI:49883"/>
        <label>1</label>
    </ligand>
</feature>
<feature type="binding site" evidence="1">
    <location>
        <position position="60"/>
    </location>
    <ligand>
        <name>[4Fe-4S] cluster</name>
        <dbReference type="ChEBI" id="CHEBI:49883"/>
        <label>2</label>
        <note>4Fe-4S-S-AdoMet</note>
    </ligand>
</feature>
<feature type="binding site" evidence="1">
    <location>
        <position position="64"/>
    </location>
    <ligand>
        <name>[4Fe-4S] cluster</name>
        <dbReference type="ChEBI" id="CHEBI:49883"/>
        <label>2</label>
        <note>4Fe-4S-S-AdoMet</note>
    </ligand>
</feature>
<feature type="binding site" evidence="1">
    <location>
        <position position="67"/>
    </location>
    <ligand>
        <name>[4Fe-4S] cluster</name>
        <dbReference type="ChEBI" id="CHEBI:49883"/>
        <label>2</label>
        <note>4Fe-4S-S-AdoMet</note>
    </ligand>
</feature>
<feature type="binding site" evidence="1">
    <location>
        <position position="272"/>
    </location>
    <ligand>
        <name>[4Fe-4S] cluster</name>
        <dbReference type="ChEBI" id="CHEBI:49883"/>
        <label>1</label>
    </ligand>
</feature>
<evidence type="ECO:0000255" key="1">
    <source>
        <dbReference type="HAMAP-Rule" id="MF_00206"/>
    </source>
</evidence>
<evidence type="ECO:0000255" key="2">
    <source>
        <dbReference type="PROSITE-ProRule" id="PRU01266"/>
    </source>
</evidence>
<comment type="function">
    <text evidence="1">Catalyzes the radical-mediated insertion of two sulfur atoms into the C-6 and C-8 positions of the octanoyl moiety bound to the lipoyl domains of lipoate-dependent enzymes, thereby converting the octanoylated domains into lipoylated derivatives.</text>
</comment>
<comment type="catalytic activity">
    <reaction evidence="1">
        <text>[[Fe-S] cluster scaffold protein carrying a second [4Fe-4S](2+) cluster] + N(6)-octanoyl-L-lysyl-[protein] + 2 oxidized [2Fe-2S]-[ferredoxin] + 2 S-adenosyl-L-methionine + 4 H(+) = [[Fe-S] cluster scaffold protein] + N(6)-[(R)-dihydrolipoyl]-L-lysyl-[protein] + 4 Fe(3+) + 2 hydrogen sulfide + 2 5'-deoxyadenosine + 2 L-methionine + 2 reduced [2Fe-2S]-[ferredoxin]</text>
        <dbReference type="Rhea" id="RHEA:16585"/>
        <dbReference type="Rhea" id="RHEA-COMP:9928"/>
        <dbReference type="Rhea" id="RHEA-COMP:10000"/>
        <dbReference type="Rhea" id="RHEA-COMP:10001"/>
        <dbReference type="Rhea" id="RHEA-COMP:10475"/>
        <dbReference type="Rhea" id="RHEA-COMP:14568"/>
        <dbReference type="Rhea" id="RHEA-COMP:14569"/>
        <dbReference type="ChEBI" id="CHEBI:15378"/>
        <dbReference type="ChEBI" id="CHEBI:17319"/>
        <dbReference type="ChEBI" id="CHEBI:29034"/>
        <dbReference type="ChEBI" id="CHEBI:29919"/>
        <dbReference type="ChEBI" id="CHEBI:33722"/>
        <dbReference type="ChEBI" id="CHEBI:33737"/>
        <dbReference type="ChEBI" id="CHEBI:33738"/>
        <dbReference type="ChEBI" id="CHEBI:57844"/>
        <dbReference type="ChEBI" id="CHEBI:59789"/>
        <dbReference type="ChEBI" id="CHEBI:78809"/>
        <dbReference type="ChEBI" id="CHEBI:83100"/>
        <dbReference type="EC" id="2.8.1.8"/>
    </reaction>
</comment>
<comment type="cofactor">
    <cofactor evidence="1">
        <name>[4Fe-4S] cluster</name>
        <dbReference type="ChEBI" id="CHEBI:49883"/>
    </cofactor>
    <text evidence="1">Binds 2 [4Fe-4S] clusters per subunit. One cluster is coordinated with 3 cysteines and an exchangeable S-adenosyl-L-methionine.</text>
</comment>
<comment type="pathway">
    <text evidence="1">Protein modification; protein lipoylation via endogenous pathway; protein N(6)-(lipoyl)lysine from octanoyl-[acyl-carrier-protein]: step 2/2.</text>
</comment>
<comment type="subcellular location">
    <subcellularLocation>
        <location evidence="1">Cytoplasm</location>
    </subcellularLocation>
</comment>
<comment type="similarity">
    <text evidence="1">Belongs to the radical SAM superfamily. Lipoyl synthase family.</text>
</comment>
<sequence length="284" mass="32154">MTVRKPEWLKVRILSEDLNRMEAFLKNMALNTVCQSANCPNMGECFARRTATFMIMGNICTRNCRFCAVEKGHPQPLDEEEPRRVAEAARRLGLRHVVVTSVTRDDLPDGGASHFAKTIYELKKLPGVTVEVLVPDFMGNEEAIRTVVEAKPDVINHNVETVPRLYSRVRPKADYIRSLNLLKKVKELDPLILTKSGIMVGLGETEEEVIEVMKDLRDIDCDMMTIGQYLRPSHKHIEVAEYVTPEQFKRYEEIGYKLGFKHVASGPLVRSSYHADVGLSLARG</sequence>
<organism>
    <name type="scientific">Caldanaerobacter subterraneus subsp. tengcongensis (strain DSM 15242 / JCM 11007 / NBRC 100824 / MB4)</name>
    <name type="common">Thermoanaerobacter tengcongensis</name>
    <dbReference type="NCBI Taxonomy" id="273068"/>
    <lineage>
        <taxon>Bacteria</taxon>
        <taxon>Bacillati</taxon>
        <taxon>Bacillota</taxon>
        <taxon>Clostridia</taxon>
        <taxon>Thermoanaerobacterales</taxon>
        <taxon>Thermoanaerobacteraceae</taxon>
        <taxon>Caldanaerobacter</taxon>
    </lineage>
</organism>
<dbReference type="EC" id="2.8.1.8" evidence="1"/>
<dbReference type="EMBL" id="AE008691">
    <property type="protein sequence ID" value="AAM24873.1"/>
    <property type="molecule type" value="Genomic_DNA"/>
</dbReference>
<dbReference type="SMR" id="Q8R9E1"/>
<dbReference type="STRING" id="273068.TTE1672"/>
<dbReference type="KEGG" id="tte:TTE1672"/>
<dbReference type="eggNOG" id="COG0320">
    <property type="taxonomic scope" value="Bacteria"/>
</dbReference>
<dbReference type="HOGENOM" id="CLU_033144_2_1_9"/>
<dbReference type="UniPathway" id="UPA00538">
    <property type="reaction ID" value="UER00593"/>
</dbReference>
<dbReference type="Proteomes" id="UP000000555">
    <property type="component" value="Chromosome"/>
</dbReference>
<dbReference type="GO" id="GO:0005737">
    <property type="term" value="C:cytoplasm"/>
    <property type="evidence" value="ECO:0007669"/>
    <property type="project" value="UniProtKB-SubCell"/>
</dbReference>
<dbReference type="GO" id="GO:0051539">
    <property type="term" value="F:4 iron, 4 sulfur cluster binding"/>
    <property type="evidence" value="ECO:0007669"/>
    <property type="project" value="UniProtKB-UniRule"/>
</dbReference>
<dbReference type="GO" id="GO:0016992">
    <property type="term" value="F:lipoate synthase activity"/>
    <property type="evidence" value="ECO:0007669"/>
    <property type="project" value="UniProtKB-UniRule"/>
</dbReference>
<dbReference type="GO" id="GO:0046872">
    <property type="term" value="F:metal ion binding"/>
    <property type="evidence" value="ECO:0007669"/>
    <property type="project" value="UniProtKB-KW"/>
</dbReference>
<dbReference type="CDD" id="cd01335">
    <property type="entry name" value="Radical_SAM"/>
    <property type="match status" value="1"/>
</dbReference>
<dbReference type="FunFam" id="3.20.20.70:FF:000040">
    <property type="entry name" value="Lipoyl synthase"/>
    <property type="match status" value="1"/>
</dbReference>
<dbReference type="Gene3D" id="3.20.20.70">
    <property type="entry name" value="Aldolase class I"/>
    <property type="match status" value="1"/>
</dbReference>
<dbReference type="HAMAP" id="MF_00206">
    <property type="entry name" value="Lipoyl_synth"/>
    <property type="match status" value="1"/>
</dbReference>
<dbReference type="InterPro" id="IPR013785">
    <property type="entry name" value="Aldolase_TIM"/>
</dbReference>
<dbReference type="InterPro" id="IPR006638">
    <property type="entry name" value="Elp3/MiaA/NifB-like_rSAM"/>
</dbReference>
<dbReference type="InterPro" id="IPR003698">
    <property type="entry name" value="Lipoyl_synth"/>
</dbReference>
<dbReference type="InterPro" id="IPR007197">
    <property type="entry name" value="rSAM"/>
</dbReference>
<dbReference type="NCBIfam" id="TIGR00510">
    <property type="entry name" value="lipA"/>
    <property type="match status" value="1"/>
</dbReference>
<dbReference type="NCBIfam" id="NF004019">
    <property type="entry name" value="PRK05481.1"/>
    <property type="match status" value="1"/>
</dbReference>
<dbReference type="NCBIfam" id="NF009544">
    <property type="entry name" value="PRK12928.1"/>
    <property type="match status" value="1"/>
</dbReference>
<dbReference type="PANTHER" id="PTHR10949">
    <property type="entry name" value="LIPOYL SYNTHASE"/>
    <property type="match status" value="1"/>
</dbReference>
<dbReference type="PANTHER" id="PTHR10949:SF0">
    <property type="entry name" value="LIPOYL SYNTHASE, MITOCHONDRIAL"/>
    <property type="match status" value="1"/>
</dbReference>
<dbReference type="Pfam" id="PF04055">
    <property type="entry name" value="Radical_SAM"/>
    <property type="match status" value="1"/>
</dbReference>
<dbReference type="PIRSF" id="PIRSF005963">
    <property type="entry name" value="Lipoyl_synth"/>
    <property type="match status" value="1"/>
</dbReference>
<dbReference type="SFLD" id="SFLDF00271">
    <property type="entry name" value="lipoyl_synthase"/>
    <property type="match status" value="1"/>
</dbReference>
<dbReference type="SFLD" id="SFLDS00029">
    <property type="entry name" value="Radical_SAM"/>
    <property type="match status" value="1"/>
</dbReference>
<dbReference type="SMART" id="SM00729">
    <property type="entry name" value="Elp3"/>
    <property type="match status" value="1"/>
</dbReference>
<dbReference type="SUPFAM" id="SSF102114">
    <property type="entry name" value="Radical SAM enzymes"/>
    <property type="match status" value="1"/>
</dbReference>
<dbReference type="PROSITE" id="PS51918">
    <property type="entry name" value="RADICAL_SAM"/>
    <property type="match status" value="1"/>
</dbReference>
<gene>
    <name evidence="1" type="primary">lipA</name>
    <name type="ordered locus">TTE1672</name>
</gene>
<reference key="1">
    <citation type="journal article" date="2002" name="Genome Res.">
        <title>A complete sequence of the T. tengcongensis genome.</title>
        <authorList>
            <person name="Bao Q."/>
            <person name="Tian Y."/>
            <person name="Li W."/>
            <person name="Xu Z."/>
            <person name="Xuan Z."/>
            <person name="Hu S."/>
            <person name="Dong W."/>
            <person name="Yang J."/>
            <person name="Chen Y."/>
            <person name="Xue Y."/>
            <person name="Xu Y."/>
            <person name="Lai X."/>
            <person name="Huang L."/>
            <person name="Dong X."/>
            <person name="Ma Y."/>
            <person name="Ling L."/>
            <person name="Tan H."/>
            <person name="Chen R."/>
            <person name="Wang J."/>
            <person name="Yu J."/>
            <person name="Yang H."/>
        </authorList>
    </citation>
    <scope>NUCLEOTIDE SEQUENCE [LARGE SCALE GENOMIC DNA]</scope>
    <source>
        <strain>DSM 15242 / JCM 11007 / NBRC 100824 / MB4</strain>
    </source>
</reference>
<keyword id="KW-0004">4Fe-4S</keyword>
<keyword id="KW-0963">Cytoplasm</keyword>
<keyword id="KW-0408">Iron</keyword>
<keyword id="KW-0411">Iron-sulfur</keyword>
<keyword id="KW-0479">Metal-binding</keyword>
<keyword id="KW-1185">Reference proteome</keyword>
<keyword id="KW-0949">S-adenosyl-L-methionine</keyword>
<keyword id="KW-0808">Transferase</keyword>
<accession>Q8R9E1</accession>
<proteinExistence type="inferred from homology"/>
<protein>
    <recommendedName>
        <fullName evidence="1">Lipoyl synthase</fullName>
        <ecNumber evidence="1">2.8.1.8</ecNumber>
    </recommendedName>
    <alternativeName>
        <fullName evidence="1">Lip-syn</fullName>
        <shortName evidence="1">LS</shortName>
    </alternativeName>
    <alternativeName>
        <fullName evidence="1">Lipoate synthase</fullName>
    </alternativeName>
    <alternativeName>
        <fullName evidence="1">Lipoic acid synthase</fullName>
    </alternativeName>
    <alternativeName>
        <fullName evidence="1">Sulfur insertion protein LipA</fullName>
    </alternativeName>
</protein>